<organism>
    <name type="scientific">Streptomyces avermitilis (strain ATCC 31267 / DSM 46492 / JCM 5070 / NBRC 14893 / NCIMB 12804 / NRRL 8165 / MA-4680)</name>
    <dbReference type="NCBI Taxonomy" id="227882"/>
    <lineage>
        <taxon>Bacteria</taxon>
        <taxon>Bacillati</taxon>
        <taxon>Actinomycetota</taxon>
        <taxon>Actinomycetes</taxon>
        <taxon>Kitasatosporales</taxon>
        <taxon>Streptomycetaceae</taxon>
        <taxon>Streptomyces</taxon>
    </lineage>
</organism>
<reference key="1">
    <citation type="journal article" date="2001" name="Proc. Natl. Acad. Sci. U.S.A.">
        <title>Genome sequence of an industrial microorganism Streptomyces avermitilis: deducing the ability of producing secondary metabolites.</title>
        <authorList>
            <person name="Omura S."/>
            <person name="Ikeda H."/>
            <person name="Ishikawa J."/>
            <person name="Hanamoto A."/>
            <person name="Takahashi C."/>
            <person name="Shinose M."/>
            <person name="Takahashi Y."/>
            <person name="Horikawa H."/>
            <person name="Nakazawa H."/>
            <person name="Osonoe T."/>
            <person name="Kikuchi H."/>
            <person name="Shiba T."/>
            <person name="Sakaki Y."/>
            <person name="Hattori M."/>
        </authorList>
    </citation>
    <scope>NUCLEOTIDE SEQUENCE [LARGE SCALE GENOMIC DNA]</scope>
    <source>
        <strain>ATCC 31267 / DSM 46492 / JCM 5070 / NBRC 14893 / NCIMB 12804 / NRRL 8165 / MA-4680</strain>
    </source>
</reference>
<reference key="2">
    <citation type="journal article" date="2003" name="Nat. Biotechnol.">
        <title>Complete genome sequence and comparative analysis of the industrial microorganism Streptomyces avermitilis.</title>
        <authorList>
            <person name="Ikeda H."/>
            <person name="Ishikawa J."/>
            <person name="Hanamoto A."/>
            <person name="Shinose M."/>
            <person name="Kikuchi H."/>
            <person name="Shiba T."/>
            <person name="Sakaki Y."/>
            <person name="Hattori M."/>
            <person name="Omura S."/>
        </authorList>
    </citation>
    <scope>NUCLEOTIDE SEQUENCE [LARGE SCALE GENOMIC DNA]</scope>
    <source>
        <strain>ATCC 31267 / DSM 46492 / JCM 5070 / NBRC 14893 / NCIMB 12804 / NRRL 8165 / MA-4680</strain>
    </source>
</reference>
<dbReference type="EMBL" id="BA000030">
    <property type="protein sequence ID" value="BAC72370.1"/>
    <property type="molecule type" value="Genomic_DNA"/>
</dbReference>
<dbReference type="RefSeq" id="WP_010986082.1">
    <property type="nucleotide sequence ID" value="NZ_JZJK01000062.1"/>
</dbReference>
<dbReference type="SMR" id="Q82EF7"/>
<dbReference type="GeneID" id="41541739"/>
<dbReference type="KEGG" id="sma:SAVERM_4658"/>
<dbReference type="eggNOG" id="COG0393">
    <property type="taxonomic scope" value="Bacteria"/>
</dbReference>
<dbReference type="HOGENOM" id="CLU_117144_1_1_11"/>
<dbReference type="OrthoDB" id="9796448at2"/>
<dbReference type="Proteomes" id="UP000000428">
    <property type="component" value="Chromosome"/>
</dbReference>
<dbReference type="Gene3D" id="3.30.110.70">
    <property type="entry name" value="Hypothetical protein apc22750. Chain B"/>
    <property type="match status" value="1"/>
</dbReference>
<dbReference type="HAMAP" id="MF_00338">
    <property type="entry name" value="UPF0145"/>
    <property type="match status" value="1"/>
</dbReference>
<dbReference type="InterPro" id="IPR035439">
    <property type="entry name" value="UPF0145_dom_sf"/>
</dbReference>
<dbReference type="InterPro" id="IPR002765">
    <property type="entry name" value="UPF0145_YbjQ-like"/>
</dbReference>
<dbReference type="PANTHER" id="PTHR34068:SF2">
    <property type="entry name" value="UPF0145 PROTEIN SCO3412"/>
    <property type="match status" value="1"/>
</dbReference>
<dbReference type="PANTHER" id="PTHR34068">
    <property type="entry name" value="UPF0145 PROTEIN YBJQ"/>
    <property type="match status" value="1"/>
</dbReference>
<dbReference type="Pfam" id="PF01906">
    <property type="entry name" value="YbjQ_1"/>
    <property type="match status" value="1"/>
</dbReference>
<dbReference type="SUPFAM" id="SSF117782">
    <property type="entry name" value="YbjQ-like"/>
    <property type="match status" value="1"/>
</dbReference>
<protein>
    <recommendedName>
        <fullName evidence="1">UPF0145 protein SAV_4658</fullName>
    </recommendedName>
</protein>
<name>Y4658_STRAW</name>
<comment type="similarity">
    <text evidence="1">Belongs to the UPF0145 family.</text>
</comment>
<gene>
    <name type="ordered locus">SAV_4658</name>
</gene>
<accession>Q82EF7</accession>
<evidence type="ECO:0000255" key="1">
    <source>
        <dbReference type="HAMAP-Rule" id="MF_00338"/>
    </source>
</evidence>
<feature type="chain" id="PRO_0000225849" description="UPF0145 protein SAV_4658">
    <location>
        <begin position="1"/>
        <end position="121"/>
    </location>
</feature>
<sequence length="121" mass="12828">MGIEEYGGGQGPHSDVLVVTTNDVPGYRVQHVIGEVFGLTVRSRHLGSQIGAGLKSMIGGELKGLTKTLVETRNQAMERLVEQARVRGGNGILMMRFDVTEAADVGTEVCAYGTAVVLVKA</sequence>
<keyword id="KW-1185">Reference proteome</keyword>
<proteinExistence type="inferred from homology"/>